<gene>
    <name evidence="1" type="primary">mutL</name>
    <name type="ordered locus">Glov_0993</name>
</gene>
<keyword id="KW-0227">DNA damage</keyword>
<keyword id="KW-0234">DNA repair</keyword>
<keyword id="KW-1185">Reference proteome</keyword>
<accession>B3E5Z2</accession>
<dbReference type="EMBL" id="CP001089">
    <property type="protein sequence ID" value="ACD94716.1"/>
    <property type="molecule type" value="Genomic_DNA"/>
</dbReference>
<dbReference type="RefSeq" id="WP_012469066.1">
    <property type="nucleotide sequence ID" value="NC_010814.1"/>
</dbReference>
<dbReference type="SMR" id="B3E5Z2"/>
<dbReference type="STRING" id="398767.Glov_0993"/>
<dbReference type="KEGG" id="glo:Glov_0993"/>
<dbReference type="eggNOG" id="COG0323">
    <property type="taxonomic scope" value="Bacteria"/>
</dbReference>
<dbReference type="HOGENOM" id="CLU_004131_4_2_7"/>
<dbReference type="OrthoDB" id="9763467at2"/>
<dbReference type="Proteomes" id="UP000002420">
    <property type="component" value="Chromosome"/>
</dbReference>
<dbReference type="GO" id="GO:0032300">
    <property type="term" value="C:mismatch repair complex"/>
    <property type="evidence" value="ECO:0007669"/>
    <property type="project" value="InterPro"/>
</dbReference>
<dbReference type="GO" id="GO:0005524">
    <property type="term" value="F:ATP binding"/>
    <property type="evidence" value="ECO:0007669"/>
    <property type="project" value="InterPro"/>
</dbReference>
<dbReference type="GO" id="GO:0016887">
    <property type="term" value="F:ATP hydrolysis activity"/>
    <property type="evidence" value="ECO:0007669"/>
    <property type="project" value="InterPro"/>
</dbReference>
<dbReference type="GO" id="GO:0140664">
    <property type="term" value="F:ATP-dependent DNA damage sensor activity"/>
    <property type="evidence" value="ECO:0007669"/>
    <property type="project" value="InterPro"/>
</dbReference>
<dbReference type="GO" id="GO:0030983">
    <property type="term" value="F:mismatched DNA binding"/>
    <property type="evidence" value="ECO:0007669"/>
    <property type="project" value="InterPro"/>
</dbReference>
<dbReference type="GO" id="GO:0006298">
    <property type="term" value="P:mismatch repair"/>
    <property type="evidence" value="ECO:0007669"/>
    <property type="project" value="UniProtKB-UniRule"/>
</dbReference>
<dbReference type="CDD" id="cd16926">
    <property type="entry name" value="HATPase_MutL-MLH-PMS-like"/>
    <property type="match status" value="1"/>
</dbReference>
<dbReference type="CDD" id="cd00782">
    <property type="entry name" value="MutL_Trans"/>
    <property type="match status" value="1"/>
</dbReference>
<dbReference type="FunFam" id="3.30.565.10:FF:000003">
    <property type="entry name" value="DNA mismatch repair endonuclease MutL"/>
    <property type="match status" value="1"/>
</dbReference>
<dbReference type="Gene3D" id="3.30.230.10">
    <property type="match status" value="1"/>
</dbReference>
<dbReference type="Gene3D" id="3.30.565.10">
    <property type="entry name" value="Histidine kinase-like ATPase, C-terminal domain"/>
    <property type="match status" value="1"/>
</dbReference>
<dbReference type="Gene3D" id="3.30.1540.20">
    <property type="entry name" value="MutL, C-terminal domain, dimerisation subdomain"/>
    <property type="match status" value="1"/>
</dbReference>
<dbReference type="Gene3D" id="3.30.1370.100">
    <property type="entry name" value="MutL, C-terminal domain, regulatory subdomain"/>
    <property type="match status" value="1"/>
</dbReference>
<dbReference type="HAMAP" id="MF_00149">
    <property type="entry name" value="DNA_mis_repair"/>
    <property type="match status" value="1"/>
</dbReference>
<dbReference type="InterPro" id="IPR014762">
    <property type="entry name" value="DNA_mismatch_repair_CS"/>
</dbReference>
<dbReference type="InterPro" id="IPR020667">
    <property type="entry name" value="DNA_mismatch_repair_MutL"/>
</dbReference>
<dbReference type="InterPro" id="IPR013507">
    <property type="entry name" value="DNA_mismatch_S5_2-like"/>
</dbReference>
<dbReference type="InterPro" id="IPR036890">
    <property type="entry name" value="HATPase_C_sf"/>
</dbReference>
<dbReference type="InterPro" id="IPR002099">
    <property type="entry name" value="MutL/Mlh/PMS"/>
</dbReference>
<dbReference type="InterPro" id="IPR038973">
    <property type="entry name" value="MutL/Mlh/Pms-like"/>
</dbReference>
<dbReference type="InterPro" id="IPR014790">
    <property type="entry name" value="MutL_C"/>
</dbReference>
<dbReference type="InterPro" id="IPR042120">
    <property type="entry name" value="MutL_C_dimsub"/>
</dbReference>
<dbReference type="InterPro" id="IPR042121">
    <property type="entry name" value="MutL_C_regsub"/>
</dbReference>
<dbReference type="InterPro" id="IPR037198">
    <property type="entry name" value="MutL_C_sf"/>
</dbReference>
<dbReference type="InterPro" id="IPR020568">
    <property type="entry name" value="Ribosomal_Su5_D2-typ_SF"/>
</dbReference>
<dbReference type="InterPro" id="IPR014721">
    <property type="entry name" value="Ribsml_uS5_D2-typ_fold_subgr"/>
</dbReference>
<dbReference type="NCBIfam" id="TIGR00585">
    <property type="entry name" value="mutl"/>
    <property type="match status" value="1"/>
</dbReference>
<dbReference type="PANTHER" id="PTHR10073">
    <property type="entry name" value="DNA MISMATCH REPAIR PROTEIN MLH, PMS, MUTL"/>
    <property type="match status" value="1"/>
</dbReference>
<dbReference type="PANTHER" id="PTHR10073:SF12">
    <property type="entry name" value="DNA MISMATCH REPAIR PROTEIN MLH1"/>
    <property type="match status" value="1"/>
</dbReference>
<dbReference type="Pfam" id="PF01119">
    <property type="entry name" value="DNA_mis_repair"/>
    <property type="match status" value="1"/>
</dbReference>
<dbReference type="Pfam" id="PF13589">
    <property type="entry name" value="HATPase_c_3"/>
    <property type="match status" value="1"/>
</dbReference>
<dbReference type="Pfam" id="PF08676">
    <property type="entry name" value="MutL_C"/>
    <property type="match status" value="1"/>
</dbReference>
<dbReference type="SMART" id="SM01340">
    <property type="entry name" value="DNA_mis_repair"/>
    <property type="match status" value="1"/>
</dbReference>
<dbReference type="SMART" id="SM00853">
    <property type="entry name" value="MutL_C"/>
    <property type="match status" value="1"/>
</dbReference>
<dbReference type="SUPFAM" id="SSF55874">
    <property type="entry name" value="ATPase domain of HSP90 chaperone/DNA topoisomerase II/histidine kinase"/>
    <property type="match status" value="1"/>
</dbReference>
<dbReference type="SUPFAM" id="SSF118116">
    <property type="entry name" value="DNA mismatch repair protein MutL"/>
    <property type="match status" value="1"/>
</dbReference>
<dbReference type="SUPFAM" id="SSF54211">
    <property type="entry name" value="Ribosomal protein S5 domain 2-like"/>
    <property type="match status" value="1"/>
</dbReference>
<dbReference type="PROSITE" id="PS00058">
    <property type="entry name" value="DNA_MISMATCH_REPAIR_1"/>
    <property type="match status" value="1"/>
</dbReference>
<feature type="chain" id="PRO_1000096655" description="DNA mismatch repair protein MutL">
    <location>
        <begin position="1"/>
        <end position="589"/>
    </location>
</feature>
<feature type="region of interest" description="Disordered" evidence="2">
    <location>
        <begin position="330"/>
        <end position="355"/>
    </location>
</feature>
<feature type="region of interest" description="Disordered" evidence="2">
    <location>
        <begin position="374"/>
        <end position="394"/>
    </location>
</feature>
<feature type="compositionally biased region" description="Basic and acidic residues" evidence="2">
    <location>
        <begin position="331"/>
        <end position="341"/>
    </location>
</feature>
<feature type="compositionally biased region" description="Pro residues" evidence="2">
    <location>
        <begin position="381"/>
        <end position="390"/>
    </location>
</feature>
<sequence>MAPHVRILSESLANKIAAGEVVERPASVVKELIENALDAGATDIRLEISAGGRRLIRVSDNGHGMSREDALLALERHATSKIRSDQDLETILTLGFRGEALPSIASVSRLRLKSREAGSIEGTEITAEGGTVRSVTACGMAVGTDLTVEQLFFNTPARLKFLRSAETEAAHVGDLMVRMAISRPDVSFSYYHDGRELLRVVPGDLRQRLLKLAARDATLFPVDGETAAARISGYLAPPAAARSTTSAMFTYINGRFVRDKVIQHAIMQAFRPILEKGRYPLVALFIELPAGEVDVNVHPTKHEVRFRRQAQVHDTIQGVLEEVLRDSPWLQRREAPQRPEPARPYTTPPPSSHREGVQHALDRFMAATPVAPPRIYEQPEPYRPPEPPAASEPTSGYFSGLSVIGQFRAAYILCQAEDRLVIIDQHAAYERVRFEQLKAGFATGGIESQRLLLPDTLELSFSEADTVRRYLNILEPLGFELEEFGGQTWRINAVPRIVAEQDHCRLLRDLLAELAEQGSNAHFDQLRDELLARVACHSVVRGSHPLERRQMEELLRAMDRTDFSAHCPHGRPVSHEITLRELEKFFNRP</sequence>
<name>MUTL_TRIL1</name>
<comment type="function">
    <text evidence="1">This protein is involved in the repair of mismatches in DNA. It is required for dam-dependent methyl-directed DNA mismatch repair. May act as a 'molecular matchmaker', a protein that promotes the formation of a stable complex between two or more DNA-binding proteins in an ATP-dependent manner without itself being part of a final effector complex.</text>
</comment>
<comment type="similarity">
    <text evidence="1">Belongs to the DNA mismatch repair MutL/HexB family.</text>
</comment>
<reference key="1">
    <citation type="submission" date="2008-05" db="EMBL/GenBank/DDBJ databases">
        <title>Complete sequence of chromosome of Geobacter lovleyi SZ.</title>
        <authorList>
            <consortium name="US DOE Joint Genome Institute"/>
            <person name="Lucas S."/>
            <person name="Copeland A."/>
            <person name="Lapidus A."/>
            <person name="Glavina del Rio T."/>
            <person name="Dalin E."/>
            <person name="Tice H."/>
            <person name="Bruce D."/>
            <person name="Goodwin L."/>
            <person name="Pitluck S."/>
            <person name="Chertkov O."/>
            <person name="Meincke L."/>
            <person name="Brettin T."/>
            <person name="Detter J.C."/>
            <person name="Han C."/>
            <person name="Tapia R."/>
            <person name="Kuske C.R."/>
            <person name="Schmutz J."/>
            <person name="Larimer F."/>
            <person name="Land M."/>
            <person name="Hauser L."/>
            <person name="Kyrpides N."/>
            <person name="Mikhailova N."/>
            <person name="Sung Y."/>
            <person name="Fletcher K.E."/>
            <person name="Ritalahti K.M."/>
            <person name="Loeffler F.E."/>
            <person name="Richardson P."/>
        </authorList>
    </citation>
    <scope>NUCLEOTIDE SEQUENCE [LARGE SCALE GENOMIC DNA]</scope>
    <source>
        <strain>ATCC BAA-1151 / DSM 17278 / SZ</strain>
    </source>
</reference>
<proteinExistence type="inferred from homology"/>
<evidence type="ECO:0000255" key="1">
    <source>
        <dbReference type="HAMAP-Rule" id="MF_00149"/>
    </source>
</evidence>
<evidence type="ECO:0000256" key="2">
    <source>
        <dbReference type="SAM" id="MobiDB-lite"/>
    </source>
</evidence>
<organism>
    <name type="scientific">Trichlorobacter lovleyi (strain ATCC BAA-1151 / DSM 17278 / SZ)</name>
    <name type="common">Geobacter lovleyi</name>
    <dbReference type="NCBI Taxonomy" id="398767"/>
    <lineage>
        <taxon>Bacteria</taxon>
        <taxon>Pseudomonadati</taxon>
        <taxon>Thermodesulfobacteriota</taxon>
        <taxon>Desulfuromonadia</taxon>
        <taxon>Geobacterales</taxon>
        <taxon>Geobacteraceae</taxon>
        <taxon>Trichlorobacter</taxon>
    </lineage>
</organism>
<protein>
    <recommendedName>
        <fullName evidence="1">DNA mismatch repair protein MutL</fullName>
    </recommendedName>
</protein>